<accession>Q601P7</accession>
<gene>
    <name evidence="1" type="primary">glyA</name>
    <name type="ordered locus">mhp154</name>
</gene>
<feature type="chain" id="PRO_0000113610" description="Probable serine hydroxymethyltransferase">
    <location>
        <begin position="1"/>
        <end position="418"/>
    </location>
</feature>
<feature type="binding site" evidence="1">
    <location>
        <position position="118"/>
    </location>
    <ligand>
        <name>(6S)-5,6,7,8-tetrahydrofolate</name>
        <dbReference type="ChEBI" id="CHEBI:57453"/>
    </ligand>
</feature>
<feature type="binding site" evidence="1">
    <location>
        <begin position="122"/>
        <end position="124"/>
    </location>
    <ligand>
        <name>(6S)-5,6,7,8-tetrahydrofolate</name>
        <dbReference type="ChEBI" id="CHEBI:57453"/>
    </ligand>
</feature>
<feature type="binding site" evidence="1">
    <location>
        <begin position="351"/>
        <end position="353"/>
    </location>
    <ligand>
        <name>(6S)-5,6,7,8-tetrahydrofolate</name>
        <dbReference type="ChEBI" id="CHEBI:57453"/>
    </ligand>
</feature>
<feature type="modified residue" description="N6-(pyridoxal phosphate)lysine" evidence="1">
    <location>
        <position position="226"/>
    </location>
</feature>
<name>GLYA_MESH2</name>
<protein>
    <recommendedName>
        <fullName evidence="1">Probable serine hydroxymethyltransferase</fullName>
        <shortName evidence="1">SHMT</shortName>
        <shortName evidence="1">Serine methylase</shortName>
        <ecNumber evidence="1">2.1.2.1</ecNumber>
    </recommendedName>
</protein>
<dbReference type="EC" id="2.1.2.1" evidence="1"/>
<dbReference type="EMBL" id="AE017332">
    <property type="protein sequence ID" value="AAV27431.1"/>
    <property type="molecule type" value="Genomic_DNA"/>
</dbReference>
<dbReference type="RefSeq" id="WP_011205992.1">
    <property type="nucleotide sequence ID" value="NC_006360.1"/>
</dbReference>
<dbReference type="SMR" id="Q601P7"/>
<dbReference type="KEGG" id="mhy:mhp154"/>
<dbReference type="eggNOG" id="COG0112">
    <property type="taxonomic scope" value="Bacteria"/>
</dbReference>
<dbReference type="HOGENOM" id="CLU_022477_2_1_14"/>
<dbReference type="PhylomeDB" id="Q601P7"/>
<dbReference type="UniPathway" id="UPA00193"/>
<dbReference type="Proteomes" id="UP000006822">
    <property type="component" value="Chromosome"/>
</dbReference>
<dbReference type="GO" id="GO:0005829">
    <property type="term" value="C:cytosol"/>
    <property type="evidence" value="ECO:0007669"/>
    <property type="project" value="TreeGrafter"/>
</dbReference>
<dbReference type="GO" id="GO:0004372">
    <property type="term" value="F:glycine hydroxymethyltransferase activity"/>
    <property type="evidence" value="ECO:0007669"/>
    <property type="project" value="UniProtKB-EC"/>
</dbReference>
<dbReference type="GO" id="GO:0030170">
    <property type="term" value="F:pyridoxal phosphate binding"/>
    <property type="evidence" value="ECO:0007669"/>
    <property type="project" value="UniProtKB-UniRule"/>
</dbReference>
<dbReference type="GO" id="GO:0019264">
    <property type="term" value="P:glycine biosynthetic process from serine"/>
    <property type="evidence" value="ECO:0007669"/>
    <property type="project" value="InterPro"/>
</dbReference>
<dbReference type="GO" id="GO:0035999">
    <property type="term" value="P:tetrahydrofolate interconversion"/>
    <property type="evidence" value="ECO:0007669"/>
    <property type="project" value="UniProtKB-UniRule"/>
</dbReference>
<dbReference type="CDD" id="cd00378">
    <property type="entry name" value="SHMT"/>
    <property type="match status" value="1"/>
</dbReference>
<dbReference type="FunFam" id="3.40.640.10:FF:000001">
    <property type="entry name" value="Serine hydroxymethyltransferase"/>
    <property type="match status" value="1"/>
</dbReference>
<dbReference type="Gene3D" id="3.90.1150.10">
    <property type="entry name" value="Aspartate Aminotransferase, domain 1"/>
    <property type="match status" value="1"/>
</dbReference>
<dbReference type="Gene3D" id="3.40.640.10">
    <property type="entry name" value="Type I PLP-dependent aspartate aminotransferase-like (Major domain)"/>
    <property type="match status" value="1"/>
</dbReference>
<dbReference type="HAMAP" id="MF_00051">
    <property type="entry name" value="SHMT"/>
    <property type="match status" value="1"/>
</dbReference>
<dbReference type="InterPro" id="IPR015424">
    <property type="entry name" value="PyrdxlP-dep_Trfase"/>
</dbReference>
<dbReference type="InterPro" id="IPR015421">
    <property type="entry name" value="PyrdxlP-dep_Trfase_major"/>
</dbReference>
<dbReference type="InterPro" id="IPR015422">
    <property type="entry name" value="PyrdxlP-dep_Trfase_small"/>
</dbReference>
<dbReference type="InterPro" id="IPR001085">
    <property type="entry name" value="Ser_HO-MeTrfase"/>
</dbReference>
<dbReference type="InterPro" id="IPR049943">
    <property type="entry name" value="Ser_HO-MeTrfase-like"/>
</dbReference>
<dbReference type="InterPro" id="IPR019798">
    <property type="entry name" value="Ser_HO-MeTrfase_PLP_BS"/>
</dbReference>
<dbReference type="InterPro" id="IPR039429">
    <property type="entry name" value="SHMT-like_dom"/>
</dbReference>
<dbReference type="NCBIfam" id="NF000586">
    <property type="entry name" value="PRK00011.1"/>
    <property type="match status" value="1"/>
</dbReference>
<dbReference type="PANTHER" id="PTHR11680">
    <property type="entry name" value="SERINE HYDROXYMETHYLTRANSFERASE"/>
    <property type="match status" value="1"/>
</dbReference>
<dbReference type="PANTHER" id="PTHR11680:SF35">
    <property type="entry name" value="SERINE HYDROXYMETHYLTRANSFERASE 1"/>
    <property type="match status" value="1"/>
</dbReference>
<dbReference type="Pfam" id="PF00464">
    <property type="entry name" value="SHMT"/>
    <property type="match status" value="1"/>
</dbReference>
<dbReference type="PIRSF" id="PIRSF000412">
    <property type="entry name" value="SHMT"/>
    <property type="match status" value="1"/>
</dbReference>
<dbReference type="SUPFAM" id="SSF53383">
    <property type="entry name" value="PLP-dependent transferases"/>
    <property type="match status" value="1"/>
</dbReference>
<dbReference type="PROSITE" id="PS00096">
    <property type="entry name" value="SHMT"/>
    <property type="match status" value="1"/>
</dbReference>
<proteinExistence type="inferred from homology"/>
<organism>
    <name type="scientific">Mesomycoplasma hyopneumoniae (strain 232)</name>
    <name type="common">Mycoplasma hyopneumoniae</name>
    <dbReference type="NCBI Taxonomy" id="295358"/>
    <lineage>
        <taxon>Bacteria</taxon>
        <taxon>Bacillati</taxon>
        <taxon>Mycoplasmatota</taxon>
        <taxon>Mycoplasmoidales</taxon>
        <taxon>Metamycoplasmataceae</taxon>
        <taxon>Mesomycoplasma</taxon>
    </lineage>
</organism>
<sequence length="418" mass="46507">MYKKIKLRDQQISELINLESKRQNSQIELIASENYASEDVILANGTSLSNKYGEGYPGKRYYGGCTFIDQIEKIAIERVKKLFKIEYANVQPYSGSSANAAVFAALLKPGDKILGLDLNAGGHLSHGYKINFSGMFYSGISYFLDENELLDYDAIEKIALKTKPNLIICGYSAYSRKIDFARFRQIADKVNAFLLADIAHIAGLIAAGQHPSPVGYAHIITSTTQKTLRGPRGGLILTNSKEIAAKIDKVVFPGIQGGPFFHTIAAKAVAFKEALEPWFKEYCAQIVKNASHFASEFIKKGIRIVSQGTENHLFTIDVLSSYNLNGKQAQILLESVNIITNKNTIPNDTLSPFVTSGLRLGTPAMTSRGFKEQEFSQMAEIIDFVLRKKELNALEIKEIKKKVKILTKNFPIKKSYWP</sequence>
<keyword id="KW-0963">Cytoplasm</keyword>
<keyword id="KW-0554">One-carbon metabolism</keyword>
<keyword id="KW-0663">Pyridoxal phosphate</keyword>
<keyword id="KW-0808">Transferase</keyword>
<reference key="1">
    <citation type="journal article" date="2004" name="J. Bacteriol.">
        <title>The genome sequence of Mycoplasma hyopneumoniae strain 232, the agent of swine mycoplasmosis.</title>
        <authorList>
            <person name="Minion F.C."/>
            <person name="Lefkowitz E.J."/>
            <person name="Madsen M.L."/>
            <person name="Cleary B.J."/>
            <person name="Swartzell S.M."/>
            <person name="Mahairas G.G."/>
        </authorList>
    </citation>
    <scope>NUCLEOTIDE SEQUENCE [LARGE SCALE GENOMIC DNA]</scope>
    <source>
        <strain>232</strain>
    </source>
</reference>
<evidence type="ECO:0000255" key="1">
    <source>
        <dbReference type="HAMAP-Rule" id="MF_00051"/>
    </source>
</evidence>
<comment type="function">
    <text evidence="1">Catalyzes the reversible interconversion of serine and glycine with tetrahydrofolate (THF) serving as the one-carbon carrier. This reaction serves as the major source of one-carbon groups required for the biosynthesis of purines, thymidylate, methionine, and other important biomolecules.</text>
</comment>
<comment type="catalytic activity">
    <reaction evidence="1">
        <text>(6R)-5,10-methylene-5,6,7,8-tetrahydrofolate + glycine + H2O = (6S)-5,6,7,8-tetrahydrofolate + L-serine</text>
        <dbReference type="Rhea" id="RHEA:15481"/>
        <dbReference type="ChEBI" id="CHEBI:15377"/>
        <dbReference type="ChEBI" id="CHEBI:15636"/>
        <dbReference type="ChEBI" id="CHEBI:33384"/>
        <dbReference type="ChEBI" id="CHEBI:57305"/>
        <dbReference type="ChEBI" id="CHEBI:57453"/>
        <dbReference type="EC" id="2.1.2.1"/>
    </reaction>
</comment>
<comment type="cofactor">
    <cofactor evidence="1">
        <name>pyridoxal 5'-phosphate</name>
        <dbReference type="ChEBI" id="CHEBI:597326"/>
    </cofactor>
</comment>
<comment type="pathway">
    <text evidence="1">One-carbon metabolism; tetrahydrofolate interconversion.</text>
</comment>
<comment type="subunit">
    <text evidence="1">Homodimer.</text>
</comment>
<comment type="subcellular location">
    <subcellularLocation>
        <location evidence="1">Cytoplasm</location>
    </subcellularLocation>
</comment>
<comment type="similarity">
    <text evidence="1">Belongs to the SHMT family.</text>
</comment>